<feature type="chain" id="PRO_1000094107" description="Ribonuclease 3">
    <location>
        <begin position="1"/>
        <end position="226"/>
    </location>
</feature>
<feature type="domain" description="RNase III" evidence="1">
    <location>
        <begin position="6"/>
        <end position="128"/>
    </location>
</feature>
<feature type="domain" description="DRBM" evidence="1">
    <location>
        <begin position="155"/>
        <end position="225"/>
    </location>
</feature>
<feature type="active site" evidence="1">
    <location>
        <position position="45"/>
    </location>
</feature>
<feature type="active site" evidence="1">
    <location>
        <position position="117"/>
    </location>
</feature>
<feature type="binding site" evidence="1">
    <location>
        <position position="41"/>
    </location>
    <ligand>
        <name>Mg(2+)</name>
        <dbReference type="ChEBI" id="CHEBI:18420"/>
    </ligand>
</feature>
<feature type="binding site" evidence="1">
    <location>
        <position position="114"/>
    </location>
    <ligand>
        <name>Mg(2+)</name>
        <dbReference type="ChEBI" id="CHEBI:18420"/>
    </ligand>
</feature>
<feature type="binding site" evidence="1">
    <location>
        <position position="117"/>
    </location>
    <ligand>
        <name>Mg(2+)</name>
        <dbReference type="ChEBI" id="CHEBI:18420"/>
    </ligand>
</feature>
<protein>
    <recommendedName>
        <fullName evidence="1">Ribonuclease 3</fullName>
        <ecNumber evidence="1">3.1.26.3</ecNumber>
    </recommendedName>
    <alternativeName>
        <fullName evidence="1">Ribonuclease III</fullName>
        <shortName evidence="1">RNase III</shortName>
    </alternativeName>
</protein>
<name>RNC_ECO5E</name>
<dbReference type="EC" id="3.1.26.3" evidence="1"/>
<dbReference type="EMBL" id="CP001164">
    <property type="protein sequence ID" value="ACI39620.1"/>
    <property type="molecule type" value="Genomic_DNA"/>
</dbReference>
<dbReference type="RefSeq" id="WP_001068343.1">
    <property type="nucleotide sequence ID" value="NC_011353.1"/>
</dbReference>
<dbReference type="SMR" id="B5Z141"/>
<dbReference type="GeneID" id="93774524"/>
<dbReference type="KEGG" id="ecf:ECH74115_3803"/>
<dbReference type="HOGENOM" id="CLU_000907_1_1_6"/>
<dbReference type="GO" id="GO:0005737">
    <property type="term" value="C:cytoplasm"/>
    <property type="evidence" value="ECO:0007669"/>
    <property type="project" value="UniProtKB-SubCell"/>
</dbReference>
<dbReference type="GO" id="GO:0003725">
    <property type="term" value="F:double-stranded RNA binding"/>
    <property type="evidence" value="ECO:0007669"/>
    <property type="project" value="TreeGrafter"/>
</dbReference>
<dbReference type="GO" id="GO:0046872">
    <property type="term" value="F:metal ion binding"/>
    <property type="evidence" value="ECO:0007669"/>
    <property type="project" value="UniProtKB-KW"/>
</dbReference>
<dbReference type="GO" id="GO:0004525">
    <property type="term" value="F:ribonuclease III activity"/>
    <property type="evidence" value="ECO:0007669"/>
    <property type="project" value="UniProtKB-UniRule"/>
</dbReference>
<dbReference type="GO" id="GO:0019843">
    <property type="term" value="F:rRNA binding"/>
    <property type="evidence" value="ECO:0007669"/>
    <property type="project" value="UniProtKB-KW"/>
</dbReference>
<dbReference type="GO" id="GO:0006397">
    <property type="term" value="P:mRNA processing"/>
    <property type="evidence" value="ECO:0007669"/>
    <property type="project" value="UniProtKB-UniRule"/>
</dbReference>
<dbReference type="GO" id="GO:0010468">
    <property type="term" value="P:regulation of gene expression"/>
    <property type="evidence" value="ECO:0007669"/>
    <property type="project" value="TreeGrafter"/>
</dbReference>
<dbReference type="GO" id="GO:0006364">
    <property type="term" value="P:rRNA processing"/>
    <property type="evidence" value="ECO:0007669"/>
    <property type="project" value="UniProtKB-UniRule"/>
</dbReference>
<dbReference type="GO" id="GO:0008033">
    <property type="term" value="P:tRNA processing"/>
    <property type="evidence" value="ECO:0007669"/>
    <property type="project" value="UniProtKB-KW"/>
</dbReference>
<dbReference type="CDD" id="cd10845">
    <property type="entry name" value="DSRM_RNAse_III_family"/>
    <property type="match status" value="1"/>
</dbReference>
<dbReference type="CDD" id="cd00593">
    <property type="entry name" value="RIBOc"/>
    <property type="match status" value="1"/>
</dbReference>
<dbReference type="FunFam" id="1.10.1520.10:FF:000001">
    <property type="entry name" value="Ribonuclease 3"/>
    <property type="match status" value="1"/>
</dbReference>
<dbReference type="FunFam" id="3.30.160.20:FF:000003">
    <property type="entry name" value="Ribonuclease 3"/>
    <property type="match status" value="1"/>
</dbReference>
<dbReference type="Gene3D" id="3.30.160.20">
    <property type="match status" value="1"/>
</dbReference>
<dbReference type="Gene3D" id="1.10.1520.10">
    <property type="entry name" value="Ribonuclease III domain"/>
    <property type="match status" value="1"/>
</dbReference>
<dbReference type="HAMAP" id="MF_00104">
    <property type="entry name" value="RNase_III"/>
    <property type="match status" value="1"/>
</dbReference>
<dbReference type="InterPro" id="IPR014720">
    <property type="entry name" value="dsRBD_dom"/>
</dbReference>
<dbReference type="InterPro" id="IPR011907">
    <property type="entry name" value="RNase_III"/>
</dbReference>
<dbReference type="InterPro" id="IPR000999">
    <property type="entry name" value="RNase_III_dom"/>
</dbReference>
<dbReference type="InterPro" id="IPR036389">
    <property type="entry name" value="RNase_III_sf"/>
</dbReference>
<dbReference type="NCBIfam" id="TIGR02191">
    <property type="entry name" value="RNaseIII"/>
    <property type="match status" value="1"/>
</dbReference>
<dbReference type="PANTHER" id="PTHR11207:SF0">
    <property type="entry name" value="RIBONUCLEASE 3"/>
    <property type="match status" value="1"/>
</dbReference>
<dbReference type="PANTHER" id="PTHR11207">
    <property type="entry name" value="RIBONUCLEASE III"/>
    <property type="match status" value="1"/>
</dbReference>
<dbReference type="Pfam" id="PF00035">
    <property type="entry name" value="dsrm"/>
    <property type="match status" value="1"/>
</dbReference>
<dbReference type="Pfam" id="PF14622">
    <property type="entry name" value="Ribonucleas_3_3"/>
    <property type="match status" value="1"/>
</dbReference>
<dbReference type="SMART" id="SM00358">
    <property type="entry name" value="DSRM"/>
    <property type="match status" value="1"/>
</dbReference>
<dbReference type="SMART" id="SM00535">
    <property type="entry name" value="RIBOc"/>
    <property type="match status" value="1"/>
</dbReference>
<dbReference type="SUPFAM" id="SSF54768">
    <property type="entry name" value="dsRNA-binding domain-like"/>
    <property type="match status" value="1"/>
</dbReference>
<dbReference type="SUPFAM" id="SSF69065">
    <property type="entry name" value="RNase III domain-like"/>
    <property type="match status" value="1"/>
</dbReference>
<dbReference type="PROSITE" id="PS50137">
    <property type="entry name" value="DS_RBD"/>
    <property type="match status" value="1"/>
</dbReference>
<dbReference type="PROSITE" id="PS00517">
    <property type="entry name" value="RNASE_3_1"/>
    <property type="match status" value="1"/>
</dbReference>
<dbReference type="PROSITE" id="PS50142">
    <property type="entry name" value="RNASE_3_2"/>
    <property type="match status" value="1"/>
</dbReference>
<gene>
    <name evidence="1" type="primary">rnc</name>
    <name type="ordered locus">ECH74115_3803</name>
</gene>
<evidence type="ECO:0000255" key="1">
    <source>
        <dbReference type="HAMAP-Rule" id="MF_00104"/>
    </source>
</evidence>
<keyword id="KW-0963">Cytoplasm</keyword>
<keyword id="KW-0255">Endonuclease</keyword>
<keyword id="KW-0378">Hydrolase</keyword>
<keyword id="KW-0460">Magnesium</keyword>
<keyword id="KW-0479">Metal-binding</keyword>
<keyword id="KW-0507">mRNA processing</keyword>
<keyword id="KW-0540">Nuclease</keyword>
<keyword id="KW-0694">RNA-binding</keyword>
<keyword id="KW-0698">rRNA processing</keyword>
<keyword id="KW-0699">rRNA-binding</keyword>
<keyword id="KW-0819">tRNA processing</keyword>
<sequence>MNPIVINRLQRKLGYTFNHQELLQQALTHRSASSKHNERLEFLGDSILSYVIANALYHRFPRVDEGDMSRMRATLVRGNTLAELAREFELGECLRLGPGELKSGGFRRESILADTVEALIGGVFLDSDIQTVEKLILNWYQTRLDEISPGDKQKDPKTRLQEYLQGRHLPLPTYLVVQVRGEAHDQEFTIHCQVSGLSEPVVGTGSSRRKAEQAAAEQALKKLELE</sequence>
<comment type="function">
    <text evidence="1">Digests double-stranded RNA. Involved in the processing of primary rRNA transcript to yield the immediate precursors to the large and small rRNAs (23S and 16S). Processes some mRNAs, and tRNAs when they are encoded in the rRNA operon. Processes pre-crRNA and tracrRNA of type II CRISPR loci if present in the organism.</text>
</comment>
<comment type="catalytic activity">
    <reaction evidence="1">
        <text>Endonucleolytic cleavage to 5'-phosphomonoester.</text>
        <dbReference type="EC" id="3.1.26.3"/>
    </reaction>
</comment>
<comment type="cofactor">
    <cofactor evidence="1">
        <name>Mg(2+)</name>
        <dbReference type="ChEBI" id="CHEBI:18420"/>
    </cofactor>
</comment>
<comment type="subunit">
    <text evidence="1">Homodimer.</text>
</comment>
<comment type="subcellular location">
    <subcellularLocation>
        <location evidence="1">Cytoplasm</location>
    </subcellularLocation>
</comment>
<comment type="similarity">
    <text evidence="1">Belongs to the ribonuclease III family.</text>
</comment>
<accession>B5Z141</accession>
<proteinExistence type="inferred from homology"/>
<reference key="1">
    <citation type="journal article" date="2011" name="Proc. Natl. Acad. Sci. U.S.A.">
        <title>Genomic anatomy of Escherichia coli O157:H7 outbreaks.</title>
        <authorList>
            <person name="Eppinger M."/>
            <person name="Mammel M.K."/>
            <person name="Leclerc J.E."/>
            <person name="Ravel J."/>
            <person name="Cebula T.A."/>
        </authorList>
    </citation>
    <scope>NUCLEOTIDE SEQUENCE [LARGE SCALE GENOMIC DNA]</scope>
    <source>
        <strain>EC4115 / EHEC</strain>
    </source>
</reference>
<organism>
    <name type="scientific">Escherichia coli O157:H7 (strain EC4115 / EHEC)</name>
    <dbReference type="NCBI Taxonomy" id="444450"/>
    <lineage>
        <taxon>Bacteria</taxon>
        <taxon>Pseudomonadati</taxon>
        <taxon>Pseudomonadota</taxon>
        <taxon>Gammaproteobacteria</taxon>
        <taxon>Enterobacterales</taxon>
        <taxon>Enterobacteriaceae</taxon>
        <taxon>Escherichia</taxon>
    </lineage>
</organism>